<protein>
    <recommendedName>
        <fullName evidence="1">Non-homologous end joining protein Ku</fullName>
    </recommendedName>
</protein>
<accession>O28548</accession>
<evidence type="ECO:0000255" key="1">
    <source>
        <dbReference type="HAMAP-Rule" id="MF_01875"/>
    </source>
</evidence>
<evidence type="ECO:0000305" key="2"/>
<sequence length="253" mass="28655">MRATWKGSISFGLVNIPVKVYKATTQKEIQFHLLHSADGGRIRYRKVCEKCGKEVSDGEIVKGYEISKNEYVILTDEDFEKIPLKSTKSIEIRQFFDPAELGLIYYSSFYYISPDKGGEKAYYLLKKAMEETNSMGIGKMTMRGKENLVALRPYDGGIVLAQLHYIDEVRSPLELPGWGAVAEITEEELELAKKLILAMKKPLKLEEFRDEYKEALMQLIEAKLSGREIVVSEGVEEVKSLIDALKASLEAVK</sequence>
<proteinExistence type="inferred from homology"/>
<gene>
    <name evidence="1" type="primary">ku</name>
    <name type="ordered locus">AF_1726</name>
</gene>
<reference key="1">
    <citation type="journal article" date="1997" name="Nature">
        <title>The complete genome sequence of the hyperthermophilic, sulphate-reducing archaeon Archaeoglobus fulgidus.</title>
        <authorList>
            <person name="Klenk H.-P."/>
            <person name="Clayton R.A."/>
            <person name="Tomb J.-F."/>
            <person name="White O."/>
            <person name="Nelson K.E."/>
            <person name="Ketchum K.A."/>
            <person name="Dodson R.J."/>
            <person name="Gwinn M.L."/>
            <person name="Hickey E.K."/>
            <person name="Peterson J.D."/>
            <person name="Richardson D.L."/>
            <person name="Kerlavage A.R."/>
            <person name="Graham D.E."/>
            <person name="Kyrpides N.C."/>
            <person name="Fleischmann R.D."/>
            <person name="Quackenbush J."/>
            <person name="Lee N.H."/>
            <person name="Sutton G.G."/>
            <person name="Gill S.R."/>
            <person name="Kirkness E.F."/>
            <person name="Dougherty B.A."/>
            <person name="McKenney K."/>
            <person name="Adams M.D."/>
            <person name="Loftus B.J."/>
            <person name="Peterson S.N."/>
            <person name="Reich C.I."/>
            <person name="McNeil L.K."/>
            <person name="Badger J.H."/>
            <person name="Glodek A."/>
            <person name="Zhou L."/>
            <person name="Overbeek R."/>
            <person name="Gocayne J.D."/>
            <person name="Weidman J.F."/>
            <person name="McDonald L.A."/>
            <person name="Utterback T.R."/>
            <person name="Cotton M.D."/>
            <person name="Spriggs T."/>
            <person name="Artiach P."/>
            <person name="Kaine B.P."/>
            <person name="Sykes S.M."/>
            <person name="Sadow P.W."/>
            <person name="D'Andrea K.P."/>
            <person name="Bowman C."/>
            <person name="Fujii C."/>
            <person name="Garland S.A."/>
            <person name="Mason T.M."/>
            <person name="Olsen G.J."/>
            <person name="Fraser C.M."/>
            <person name="Smith H.O."/>
            <person name="Woese C.R."/>
            <person name="Venter J.C."/>
        </authorList>
    </citation>
    <scope>NUCLEOTIDE SEQUENCE [LARGE SCALE GENOMIC DNA]</scope>
    <source>
        <strain>ATCC 49558 / DSM 4304 / JCM 9628 / NBRC 100126 / VC-16</strain>
    </source>
</reference>
<feature type="chain" id="PRO_0000389202" description="Non-homologous end joining protein Ku">
    <location>
        <begin position="1"/>
        <end position="253"/>
    </location>
</feature>
<feature type="domain" description="Ku" evidence="1">
    <location>
        <begin position="9"/>
        <end position="192"/>
    </location>
</feature>
<dbReference type="EMBL" id="AE000782">
    <property type="protein sequence ID" value="AAB89525.1"/>
    <property type="status" value="ALT_INIT"/>
    <property type="molecule type" value="Genomic_DNA"/>
</dbReference>
<dbReference type="PIR" id="E69465">
    <property type="entry name" value="E69465"/>
</dbReference>
<dbReference type="RefSeq" id="WP_048064443.1">
    <property type="nucleotide sequence ID" value="NC_000917.1"/>
</dbReference>
<dbReference type="SMR" id="O28548"/>
<dbReference type="STRING" id="224325.AF_1726"/>
<dbReference type="PaxDb" id="224325-AF_1726"/>
<dbReference type="EnsemblBacteria" id="AAB89525">
    <property type="protein sequence ID" value="AAB89525"/>
    <property type="gene ID" value="AF_1726"/>
</dbReference>
<dbReference type="KEGG" id="afu:AF_1726"/>
<dbReference type="eggNOG" id="arCOG10146">
    <property type="taxonomic scope" value="Archaea"/>
</dbReference>
<dbReference type="HOGENOM" id="CLU_048975_1_0_2"/>
<dbReference type="OrthoDB" id="147616at2157"/>
<dbReference type="Proteomes" id="UP000002199">
    <property type="component" value="Chromosome"/>
</dbReference>
<dbReference type="GO" id="GO:0003690">
    <property type="term" value="F:double-stranded DNA binding"/>
    <property type="evidence" value="ECO:0007669"/>
    <property type="project" value="UniProtKB-UniRule"/>
</dbReference>
<dbReference type="GO" id="GO:0006310">
    <property type="term" value="P:DNA recombination"/>
    <property type="evidence" value="ECO:0007669"/>
    <property type="project" value="UniProtKB-KW"/>
</dbReference>
<dbReference type="GO" id="GO:0006303">
    <property type="term" value="P:double-strand break repair via nonhomologous end joining"/>
    <property type="evidence" value="ECO:0007669"/>
    <property type="project" value="UniProtKB-UniRule"/>
</dbReference>
<dbReference type="CDD" id="cd00789">
    <property type="entry name" value="KU_like"/>
    <property type="match status" value="1"/>
</dbReference>
<dbReference type="FunFam" id="2.40.290.10:FF:000004">
    <property type="entry name" value="Non-homologous end joining protein Ku"/>
    <property type="match status" value="1"/>
</dbReference>
<dbReference type="Gene3D" id="2.40.290.10">
    <property type="match status" value="1"/>
</dbReference>
<dbReference type="HAMAP" id="MF_01875">
    <property type="entry name" value="Prokaryotic_Ku"/>
    <property type="match status" value="1"/>
</dbReference>
<dbReference type="InterPro" id="IPR006164">
    <property type="entry name" value="Ku70/Ku80_beta-barrel_dom"/>
</dbReference>
<dbReference type="InterPro" id="IPR009187">
    <property type="entry name" value="Prok_Ku"/>
</dbReference>
<dbReference type="InterPro" id="IPR016194">
    <property type="entry name" value="SPOC-like_C_dom_sf"/>
</dbReference>
<dbReference type="NCBIfam" id="TIGR02772">
    <property type="entry name" value="Ku_bact"/>
    <property type="match status" value="1"/>
</dbReference>
<dbReference type="PANTHER" id="PTHR41251">
    <property type="entry name" value="NON-HOMOLOGOUS END JOINING PROTEIN KU"/>
    <property type="match status" value="1"/>
</dbReference>
<dbReference type="PANTHER" id="PTHR41251:SF1">
    <property type="entry name" value="NON-HOMOLOGOUS END JOINING PROTEIN KU"/>
    <property type="match status" value="1"/>
</dbReference>
<dbReference type="Pfam" id="PF02735">
    <property type="entry name" value="Ku"/>
    <property type="match status" value="1"/>
</dbReference>
<dbReference type="PIRSF" id="PIRSF006493">
    <property type="entry name" value="Prok_Ku"/>
    <property type="match status" value="1"/>
</dbReference>
<dbReference type="SMART" id="SM00559">
    <property type="entry name" value="Ku78"/>
    <property type="match status" value="1"/>
</dbReference>
<dbReference type="SUPFAM" id="SSF100939">
    <property type="entry name" value="SPOC domain-like"/>
    <property type="match status" value="1"/>
</dbReference>
<keyword id="KW-0227">DNA damage</keyword>
<keyword id="KW-0233">DNA recombination</keyword>
<keyword id="KW-0234">DNA repair</keyword>
<keyword id="KW-0238">DNA-binding</keyword>
<keyword id="KW-1185">Reference proteome</keyword>
<comment type="function">
    <text evidence="1">With LigD forms a non-homologous end joining (NHEJ) DNA repair enzyme, which repairs dsDNA breaks with reduced fidelity. Binds linear dsDNA with 5'- and 3'- overhangs but not closed circular dsDNA nor ssDNA. Recruits and stimulates the ligase activity of LigD.</text>
</comment>
<comment type="subunit">
    <text evidence="1">Homodimer. Interacts with LigD.</text>
</comment>
<comment type="similarity">
    <text evidence="1">Belongs to the prokaryotic Ku family.</text>
</comment>
<comment type="sequence caution" evidence="2">
    <conflict type="erroneous initiation">
        <sequence resource="EMBL-CDS" id="AAB89525"/>
    </conflict>
    <text>Extended N-terminus.</text>
</comment>
<organism>
    <name type="scientific">Archaeoglobus fulgidus (strain ATCC 49558 / DSM 4304 / JCM 9628 / NBRC 100126 / VC-16)</name>
    <dbReference type="NCBI Taxonomy" id="224325"/>
    <lineage>
        <taxon>Archaea</taxon>
        <taxon>Methanobacteriati</taxon>
        <taxon>Methanobacteriota</taxon>
        <taxon>Archaeoglobi</taxon>
        <taxon>Archaeoglobales</taxon>
        <taxon>Archaeoglobaceae</taxon>
        <taxon>Archaeoglobus</taxon>
    </lineage>
</organism>
<name>KU_ARCFU</name>